<feature type="chain" id="PRO_1000085915" description="Small ribosomal subunit protein uS8">
    <location>
        <begin position="1"/>
        <end position="132"/>
    </location>
</feature>
<reference key="1">
    <citation type="submission" date="2007-06" db="EMBL/GenBank/DDBJ databases">
        <title>Complete sequence of Clostridium beijerinckii NCIMB 8052.</title>
        <authorList>
            <consortium name="US DOE Joint Genome Institute"/>
            <person name="Copeland A."/>
            <person name="Lucas S."/>
            <person name="Lapidus A."/>
            <person name="Barry K."/>
            <person name="Detter J.C."/>
            <person name="Glavina del Rio T."/>
            <person name="Hammon N."/>
            <person name="Israni S."/>
            <person name="Dalin E."/>
            <person name="Tice H."/>
            <person name="Pitluck S."/>
            <person name="Sims D."/>
            <person name="Brettin T."/>
            <person name="Bruce D."/>
            <person name="Tapia R."/>
            <person name="Brainard J."/>
            <person name="Schmutz J."/>
            <person name="Larimer F."/>
            <person name="Land M."/>
            <person name="Hauser L."/>
            <person name="Kyrpides N."/>
            <person name="Mikhailova N."/>
            <person name="Bennet G."/>
            <person name="Cann I."/>
            <person name="Chen J.-S."/>
            <person name="Contreras A.L."/>
            <person name="Jones D."/>
            <person name="Kashket E."/>
            <person name="Mitchell W."/>
            <person name="Stoddard S."/>
            <person name="Schwarz W."/>
            <person name="Qureshi N."/>
            <person name="Young M."/>
            <person name="Shi Z."/>
            <person name="Ezeji T."/>
            <person name="White B."/>
            <person name="Blaschek H."/>
            <person name="Richardson P."/>
        </authorList>
    </citation>
    <scope>NUCLEOTIDE SEQUENCE [LARGE SCALE GENOMIC DNA]</scope>
    <source>
        <strain>ATCC 51743 / NCIMB 8052</strain>
    </source>
</reference>
<proteinExistence type="inferred from homology"/>
<protein>
    <recommendedName>
        <fullName evidence="1">Small ribosomal subunit protein uS8</fullName>
    </recommendedName>
    <alternativeName>
        <fullName evidence="2">30S ribosomal protein S8</fullName>
    </alternativeName>
</protein>
<keyword id="KW-0687">Ribonucleoprotein</keyword>
<keyword id="KW-0689">Ribosomal protein</keyword>
<keyword id="KW-0694">RNA-binding</keyword>
<keyword id="KW-0699">rRNA-binding</keyword>
<comment type="function">
    <text evidence="1">One of the primary rRNA binding proteins, it binds directly to 16S rRNA central domain where it helps coordinate assembly of the platform of the 30S subunit.</text>
</comment>
<comment type="subunit">
    <text evidence="1">Part of the 30S ribosomal subunit. Contacts proteins S5 and S12.</text>
</comment>
<comment type="similarity">
    <text evidence="1">Belongs to the universal ribosomal protein uS8 family.</text>
</comment>
<gene>
    <name evidence="1" type="primary">rpsH</name>
    <name type="ordered locus">Cbei_0165</name>
</gene>
<accession>A6LPS5</accession>
<name>RS8_CLOB8</name>
<organism>
    <name type="scientific">Clostridium beijerinckii (strain ATCC 51743 / NCIMB 8052)</name>
    <name type="common">Clostridium acetobutylicum</name>
    <dbReference type="NCBI Taxonomy" id="290402"/>
    <lineage>
        <taxon>Bacteria</taxon>
        <taxon>Bacillati</taxon>
        <taxon>Bacillota</taxon>
        <taxon>Clostridia</taxon>
        <taxon>Eubacteriales</taxon>
        <taxon>Clostridiaceae</taxon>
        <taxon>Clostridium</taxon>
    </lineage>
</organism>
<dbReference type="EMBL" id="CP000721">
    <property type="protein sequence ID" value="ABR32355.1"/>
    <property type="molecule type" value="Genomic_DNA"/>
</dbReference>
<dbReference type="RefSeq" id="WP_008426597.1">
    <property type="nucleotide sequence ID" value="NC_009617.1"/>
</dbReference>
<dbReference type="SMR" id="A6LPS5"/>
<dbReference type="GeneID" id="66343055"/>
<dbReference type="KEGG" id="cbe:Cbei_0165"/>
<dbReference type="eggNOG" id="COG0096">
    <property type="taxonomic scope" value="Bacteria"/>
</dbReference>
<dbReference type="HOGENOM" id="CLU_098428_0_2_9"/>
<dbReference type="Proteomes" id="UP000000565">
    <property type="component" value="Chromosome"/>
</dbReference>
<dbReference type="GO" id="GO:1990904">
    <property type="term" value="C:ribonucleoprotein complex"/>
    <property type="evidence" value="ECO:0007669"/>
    <property type="project" value="UniProtKB-KW"/>
</dbReference>
<dbReference type="GO" id="GO:0005840">
    <property type="term" value="C:ribosome"/>
    <property type="evidence" value="ECO:0007669"/>
    <property type="project" value="UniProtKB-KW"/>
</dbReference>
<dbReference type="GO" id="GO:0019843">
    <property type="term" value="F:rRNA binding"/>
    <property type="evidence" value="ECO:0007669"/>
    <property type="project" value="UniProtKB-UniRule"/>
</dbReference>
<dbReference type="GO" id="GO:0003735">
    <property type="term" value="F:structural constituent of ribosome"/>
    <property type="evidence" value="ECO:0007669"/>
    <property type="project" value="InterPro"/>
</dbReference>
<dbReference type="GO" id="GO:0006412">
    <property type="term" value="P:translation"/>
    <property type="evidence" value="ECO:0007669"/>
    <property type="project" value="UniProtKB-UniRule"/>
</dbReference>
<dbReference type="FunFam" id="3.30.1370.30:FF:000002">
    <property type="entry name" value="30S ribosomal protein S8"/>
    <property type="match status" value="1"/>
</dbReference>
<dbReference type="FunFam" id="3.30.1490.10:FF:000001">
    <property type="entry name" value="30S ribosomal protein S8"/>
    <property type="match status" value="1"/>
</dbReference>
<dbReference type="Gene3D" id="3.30.1370.30">
    <property type="match status" value="1"/>
</dbReference>
<dbReference type="Gene3D" id="3.30.1490.10">
    <property type="match status" value="1"/>
</dbReference>
<dbReference type="HAMAP" id="MF_01302_B">
    <property type="entry name" value="Ribosomal_uS8_B"/>
    <property type="match status" value="1"/>
</dbReference>
<dbReference type="InterPro" id="IPR000630">
    <property type="entry name" value="Ribosomal_uS8"/>
</dbReference>
<dbReference type="InterPro" id="IPR047863">
    <property type="entry name" value="Ribosomal_uS8_CS"/>
</dbReference>
<dbReference type="InterPro" id="IPR035987">
    <property type="entry name" value="Ribosomal_uS8_sf"/>
</dbReference>
<dbReference type="NCBIfam" id="NF001109">
    <property type="entry name" value="PRK00136.1"/>
    <property type="match status" value="1"/>
</dbReference>
<dbReference type="PANTHER" id="PTHR11758">
    <property type="entry name" value="40S RIBOSOMAL PROTEIN S15A"/>
    <property type="match status" value="1"/>
</dbReference>
<dbReference type="Pfam" id="PF00410">
    <property type="entry name" value="Ribosomal_S8"/>
    <property type="match status" value="1"/>
</dbReference>
<dbReference type="SUPFAM" id="SSF56047">
    <property type="entry name" value="Ribosomal protein S8"/>
    <property type="match status" value="1"/>
</dbReference>
<dbReference type="PROSITE" id="PS00053">
    <property type="entry name" value="RIBOSOMAL_S8"/>
    <property type="match status" value="1"/>
</dbReference>
<sequence length="132" mass="14651">MVMTDPIADLLTRVRNANAVRHEVVEVPSSNVKKEIANILLQEGYIKEINEYNDGVVPMLRLSLKYGANKERVITGIKRISKPGLRVYCKKDEVPKVLNGLGIAVVSTSNGIMVDREARKNGLGGEVICYVW</sequence>
<evidence type="ECO:0000255" key="1">
    <source>
        <dbReference type="HAMAP-Rule" id="MF_01302"/>
    </source>
</evidence>
<evidence type="ECO:0000305" key="2"/>